<reference key="1">
    <citation type="journal article" date="1985" name="Proc. Natl. Acad. Sci. U.S.A.">
        <title>A molecular basis for the Ia.2 and Ia.19 antigenic determinants.</title>
        <authorList>
            <person name="Landais D."/>
            <person name="Matthes H."/>
            <person name="Benoist C."/>
            <person name="Mathis D."/>
        </authorList>
    </citation>
    <scope>NUCLEOTIDE SEQUENCE [MRNA]</scope>
</reference>
<reference key="2">
    <citation type="journal article" date="2010" name="Cell">
        <title>A tissue-specific atlas of mouse protein phosphorylation and expression.</title>
        <authorList>
            <person name="Huttlin E.L."/>
            <person name="Jedrychowski M.P."/>
            <person name="Elias J.E."/>
            <person name="Goswami T."/>
            <person name="Rad R."/>
            <person name="Beausoleil S.A."/>
            <person name="Villen J."/>
            <person name="Haas W."/>
            <person name="Sowa M.E."/>
            <person name="Gygi S.P."/>
        </authorList>
    </citation>
    <scope>IDENTIFICATION BY MASS SPECTROMETRY [LARGE SCALE ANALYSIS]</scope>
    <source>
        <tissue>Heart</tissue>
        <tissue>Kidney</tissue>
        <tissue>Lung</tissue>
        <tissue>Spleen</tissue>
    </source>
</reference>
<accession>P14436</accession>
<name>HA2R_MOUSE</name>
<keyword id="KW-1064">Adaptive immunity</keyword>
<keyword id="KW-1015">Disulfide bond</keyword>
<keyword id="KW-0325">Glycoprotein</keyword>
<keyword id="KW-0391">Immunity</keyword>
<keyword id="KW-0472">Membrane</keyword>
<keyword id="KW-0491">MHC II</keyword>
<keyword id="KW-1185">Reference proteome</keyword>
<keyword id="KW-0812">Transmembrane</keyword>
<keyword id="KW-1133">Transmembrane helix</keyword>
<sequence>EDDIEADHVGVYGTTVYQSPGDIGQFTHEFDGDEWFYVDLDKKETVWMLPEFGQLTSFDPQGGLQNIAVVKHNLEILTKRSNFTPAANEAPQATVFPKSPVLLGQPNTLICFVDNIFPPVINITWLRNSKSVTDGVYETSFLVNRDHSFHKLSYLTFIPSDDDIYDCKVEHWGLEEPVLKHWEPEIPAPMSELTETVVCALGLSVGLVGIVVGTIFIIQGLRSGGTSRHPGPL</sequence>
<protein>
    <recommendedName>
        <fullName>H-2 class II histocompatibility antigen, A-R alpha chain</fullName>
    </recommendedName>
</protein>
<evidence type="ECO:0000255" key="1"/>
<evidence type="ECO:0000255" key="2">
    <source>
        <dbReference type="PROSITE-ProRule" id="PRU00114"/>
    </source>
</evidence>
<evidence type="ECO:0000305" key="3"/>
<proteinExistence type="evidence at protein level"/>
<organism>
    <name type="scientific">Mus musculus</name>
    <name type="common">Mouse</name>
    <dbReference type="NCBI Taxonomy" id="10090"/>
    <lineage>
        <taxon>Eukaryota</taxon>
        <taxon>Metazoa</taxon>
        <taxon>Chordata</taxon>
        <taxon>Craniata</taxon>
        <taxon>Vertebrata</taxon>
        <taxon>Euteleostomi</taxon>
        <taxon>Mammalia</taxon>
        <taxon>Eutheria</taxon>
        <taxon>Euarchontoglires</taxon>
        <taxon>Glires</taxon>
        <taxon>Rodentia</taxon>
        <taxon>Myomorpha</taxon>
        <taxon>Muroidea</taxon>
        <taxon>Muridae</taxon>
        <taxon>Murinae</taxon>
        <taxon>Mus</taxon>
        <taxon>Mus</taxon>
    </lineage>
</organism>
<comment type="subcellular location">
    <subcellularLocation>
        <location evidence="3">Membrane</location>
        <topology evidence="3">Single-pass type I membrane protein</topology>
    </subcellularLocation>
</comment>
<comment type="similarity">
    <text evidence="3">Belongs to the MHC class II family.</text>
</comment>
<gene>
    <name type="primary">H2-Aa</name>
</gene>
<dbReference type="EMBL" id="M11356">
    <property type="protein sequence ID" value="AAA39621.1"/>
    <property type="molecule type" value="mRNA"/>
</dbReference>
<dbReference type="PIR" id="I79357">
    <property type="entry name" value="I79357"/>
</dbReference>
<dbReference type="SMR" id="P14436"/>
<dbReference type="GlyCosmos" id="P14436">
    <property type="glycosylation" value="1 site, No reported glycans"/>
</dbReference>
<dbReference type="jPOST" id="P14436"/>
<dbReference type="ProteomicsDB" id="271387"/>
<dbReference type="AGR" id="MGI:95895"/>
<dbReference type="MGI" id="MGI:95895">
    <property type="gene designation" value="H2-Aa"/>
</dbReference>
<dbReference type="OrthoDB" id="8925804at2759"/>
<dbReference type="ChiTaRS" id="H2-Aa">
    <property type="organism name" value="mouse"/>
</dbReference>
<dbReference type="Proteomes" id="UP000000589">
    <property type="component" value="Unplaced"/>
</dbReference>
<dbReference type="GO" id="GO:0009897">
    <property type="term" value="C:external side of plasma membrane"/>
    <property type="evidence" value="ECO:0000314"/>
    <property type="project" value="MGI"/>
</dbReference>
<dbReference type="GO" id="GO:0005764">
    <property type="term" value="C:lysosome"/>
    <property type="evidence" value="ECO:0000314"/>
    <property type="project" value="MGI"/>
</dbReference>
<dbReference type="GO" id="GO:0042613">
    <property type="term" value="C:MHC class II protein complex"/>
    <property type="evidence" value="ECO:0000314"/>
    <property type="project" value="MGI"/>
</dbReference>
<dbReference type="GO" id="GO:0005886">
    <property type="term" value="C:plasma membrane"/>
    <property type="evidence" value="ECO:0000314"/>
    <property type="project" value="MGI"/>
</dbReference>
<dbReference type="GO" id="GO:0042605">
    <property type="term" value="F:peptide antigen binding"/>
    <property type="evidence" value="ECO:0000314"/>
    <property type="project" value="MGI"/>
</dbReference>
<dbReference type="GO" id="GO:0002250">
    <property type="term" value="P:adaptive immune response"/>
    <property type="evidence" value="ECO:0007669"/>
    <property type="project" value="UniProtKB-KW"/>
</dbReference>
<dbReference type="GO" id="GO:0019882">
    <property type="term" value="P:antigen processing and presentation"/>
    <property type="evidence" value="ECO:0000314"/>
    <property type="project" value="MGI"/>
</dbReference>
<dbReference type="GO" id="GO:0019886">
    <property type="term" value="P:antigen processing and presentation of exogenous peptide antigen via MHC class II"/>
    <property type="evidence" value="ECO:0000314"/>
    <property type="project" value="MGI"/>
</dbReference>
<dbReference type="GO" id="GO:0048002">
    <property type="term" value="P:antigen processing and presentation of peptide antigen"/>
    <property type="evidence" value="ECO:0000314"/>
    <property type="project" value="MGI"/>
</dbReference>
<dbReference type="GO" id="GO:0045582">
    <property type="term" value="P:positive regulation of T cell differentiation"/>
    <property type="evidence" value="ECO:0000314"/>
    <property type="project" value="MGI"/>
</dbReference>
<dbReference type="CDD" id="cd21006">
    <property type="entry name" value="IgC1_MHC_II_alpha_I-A"/>
    <property type="match status" value="1"/>
</dbReference>
<dbReference type="FunFam" id="2.60.40.10:FF:000280">
    <property type="entry name" value="HLA class II histocompatibility antigen, DR alpha chain"/>
    <property type="match status" value="1"/>
</dbReference>
<dbReference type="FunFam" id="3.10.320.10:FF:000002">
    <property type="entry name" value="HLA class II histocompatibility antigen, DR alpha chain"/>
    <property type="match status" value="1"/>
</dbReference>
<dbReference type="Gene3D" id="3.10.320.10">
    <property type="entry name" value="Class II Histocompatibility Antigen, M Beta Chain, Chain B, domain 1"/>
    <property type="match status" value="1"/>
</dbReference>
<dbReference type="Gene3D" id="2.60.40.10">
    <property type="entry name" value="Immunoglobulins"/>
    <property type="match status" value="1"/>
</dbReference>
<dbReference type="InterPro" id="IPR007110">
    <property type="entry name" value="Ig-like_dom"/>
</dbReference>
<dbReference type="InterPro" id="IPR036179">
    <property type="entry name" value="Ig-like_dom_sf"/>
</dbReference>
<dbReference type="InterPro" id="IPR013783">
    <property type="entry name" value="Ig-like_fold"/>
</dbReference>
<dbReference type="InterPro" id="IPR003006">
    <property type="entry name" value="Ig/MHC_CS"/>
</dbReference>
<dbReference type="InterPro" id="IPR003597">
    <property type="entry name" value="Ig_C1-set"/>
</dbReference>
<dbReference type="InterPro" id="IPR050160">
    <property type="entry name" value="MHC/Immunoglobulin"/>
</dbReference>
<dbReference type="InterPro" id="IPR011162">
    <property type="entry name" value="MHC_I/II-like_Ag-recog"/>
</dbReference>
<dbReference type="InterPro" id="IPR014745">
    <property type="entry name" value="MHC_II_a/b_N"/>
</dbReference>
<dbReference type="InterPro" id="IPR001003">
    <property type="entry name" value="MHC_II_a_N"/>
</dbReference>
<dbReference type="PANTHER" id="PTHR19944:SF59">
    <property type="entry name" value="HLA CLASS II HISTOCOMPATIBILITY ANTIGEN, DQ ALPHA 1 CHAIN"/>
    <property type="match status" value="1"/>
</dbReference>
<dbReference type="PANTHER" id="PTHR19944">
    <property type="entry name" value="MHC CLASS II-RELATED"/>
    <property type="match status" value="1"/>
</dbReference>
<dbReference type="Pfam" id="PF07654">
    <property type="entry name" value="C1-set"/>
    <property type="match status" value="1"/>
</dbReference>
<dbReference type="Pfam" id="PF00993">
    <property type="entry name" value="MHC_II_alpha"/>
    <property type="match status" value="1"/>
</dbReference>
<dbReference type="SMART" id="SM00407">
    <property type="entry name" value="IGc1"/>
    <property type="match status" value="1"/>
</dbReference>
<dbReference type="SMART" id="SM00920">
    <property type="entry name" value="MHC_II_alpha"/>
    <property type="match status" value="1"/>
</dbReference>
<dbReference type="SUPFAM" id="SSF48726">
    <property type="entry name" value="Immunoglobulin"/>
    <property type="match status" value="1"/>
</dbReference>
<dbReference type="SUPFAM" id="SSF54452">
    <property type="entry name" value="MHC antigen-recognition domain"/>
    <property type="match status" value="1"/>
</dbReference>
<dbReference type="PROSITE" id="PS50835">
    <property type="entry name" value="IG_LIKE"/>
    <property type="match status" value="1"/>
</dbReference>
<dbReference type="PROSITE" id="PS00290">
    <property type="entry name" value="IG_MHC"/>
    <property type="match status" value="1"/>
</dbReference>
<feature type="chain" id="PRO_0000080747" description="H-2 class II histocompatibility antigen, A-R alpha chain">
    <location>
        <begin position="1"/>
        <end position="233"/>
    </location>
</feature>
<feature type="topological domain" description="Extracellular" evidence="1">
    <location>
        <begin position="1"/>
        <end position="195"/>
    </location>
</feature>
<feature type="transmembrane region" description="Helical" evidence="1">
    <location>
        <begin position="196"/>
        <end position="221"/>
    </location>
</feature>
<feature type="topological domain" description="Cytoplasmic" evidence="1">
    <location>
        <begin position="222"/>
        <end position="233"/>
    </location>
</feature>
<feature type="domain" description="Ig-like C1-type">
    <location>
        <begin position="91"/>
        <end position="183"/>
    </location>
</feature>
<feature type="region of interest" description="Alpha-1">
    <location>
        <begin position="1"/>
        <end position="88"/>
    </location>
</feature>
<feature type="region of interest" description="Alpha-2">
    <location>
        <begin position="89"/>
        <end position="182"/>
    </location>
</feature>
<feature type="region of interest" description="Connecting peptide">
    <location>
        <begin position="183"/>
        <end position="195"/>
    </location>
</feature>
<feature type="glycosylation site" description="N-linked (GlcNAc...) asparagine" evidence="1">
    <location>
        <position position="122"/>
    </location>
</feature>
<feature type="disulfide bond" evidence="2">
    <location>
        <begin position="111"/>
        <end position="167"/>
    </location>
</feature>